<name>GAG_BLVAU</name>
<organismHost>
    <name type="scientific">Bos taurus</name>
    <name type="common">Bovine</name>
    <dbReference type="NCBI Taxonomy" id="9913"/>
</organismHost>
<comment type="function">
    <molecule>Gag polyprotein</molecule>
    <text evidence="1">The matrix domain targets Gag, Gag-Pro and Gag-Pro-Pol polyproteins to the plasma membrane via a multipartite membrane binding signal, that includes its myristoylated N-terminus.</text>
</comment>
<comment type="function">
    <molecule>Matrix protein p15</molecule>
    <text evidence="1">Matrix protein.</text>
</comment>
<comment type="function">
    <molecule>Capsid protein p24</molecule>
    <text evidence="1">Forms the spherical core of the virus that encapsulates the genomic RNA-nucleocapsid complex.</text>
</comment>
<comment type="function">
    <molecule>Nucleocapsid protein p12-gag</molecule>
    <text evidence="5">Binds strongly to viral nucleic acids and promote their aggregation. Also destabilizes the nucleic acids duplexes via highly structured zinc-binding motifs.</text>
</comment>
<comment type="subunit">
    <molecule>Gag polyprotein</molecule>
    <text evidence="1">Homodimer; the homodimers are part of the immature particles. Interacts with host NEDD4; these interactions are essential for budding and release of viral particles.</text>
</comment>
<comment type="subunit">
    <molecule>Matrix protein p15</molecule>
    <text evidence="1">Homodimer; further assembles as homohexamers.</text>
</comment>
<comment type="subcellular location">
    <molecule>Matrix protein p15</molecule>
    <subcellularLocation>
        <location evidence="1">Virion</location>
    </subcellularLocation>
</comment>
<comment type="subcellular location">
    <molecule>Capsid protein p24</molecule>
    <subcellularLocation>
        <location evidence="1">Virion</location>
    </subcellularLocation>
</comment>
<comment type="subcellular location">
    <molecule>Nucleocapsid protein p12-gag</molecule>
    <subcellularLocation>
        <location evidence="1">Virion</location>
    </subcellularLocation>
</comment>
<comment type="alternative products">
    <event type="ribosomal frameshifting"/>
    <isoform>
        <id>P25058-1</id>
        <name>Gag polyprotein</name>
        <sequence type="displayed"/>
    </isoform>
    <isoform>
        <id>P0DOI1-1</id>
        <name>Gag-Pro polyprotein</name>
        <sequence type="external"/>
    </isoform>
    <isoform>
        <id>P25059-1</id>
        <name>Gag-Pro-Pol polyprotein</name>
        <sequence type="external"/>
    </isoform>
</comment>
<comment type="domain">
    <molecule>Gag polyprotein</molecule>
    <text evidence="4">Late-budding domains (L domains) are short sequence motifs essential for viral particle release. They can occur individually or in close proximity within structural proteins. They interacts with sorting cellular proteins of the multivesicular body (MVB) pathway. Most of these proteins are class E vacuolar protein sorting factors belonging to ESCRT-I, ESCRT-II or ESCRT-III complexes. Matrix protein p15 contains one L domain: a PPXY motif which binds to the WW domains of the ubiquitin ligase NEDD4.</text>
</comment>
<comment type="domain">
    <molecule>Capsid protein p24</molecule>
    <text evidence="1">The capsid protein N-terminus seems to be involved in Gag-Gag interactions.</text>
</comment>
<comment type="PTM">
    <molecule>Gag polyprotein</molecule>
    <text evidence="1">Specific enzymatic cleavages by the viral protease yield mature proteins. The polyprotein is cleaved during and after budding, this process is termed maturation.</text>
</comment>
<comment type="PTM">
    <molecule>Gag polyprotein</molecule>
    <text evidence="1">Myristoylated. Myristoylation of the matrix (MA) domain mediates the transport and binding of Gag polyproteins to the host plasma membrane and is required for the assembly of viral particles.</text>
</comment>
<comment type="miscellaneous">
    <molecule>Isoform Gag polyprotein</molecule>
    <text evidence="6">Produced by conventional translation.</text>
</comment>
<comment type="sequence caution" evidence="7">
    <conflict type="frameshift">
        <sequence resource="EMBL-CDS" id="BAA00543"/>
    </conflict>
</comment>
<proteinExistence type="evidence at protein level"/>
<accession>P25058</accession>
<keyword id="KW-0167">Capsid protein</keyword>
<keyword id="KW-0945">Host-virus interaction</keyword>
<keyword id="KW-0449">Lipoprotein</keyword>
<keyword id="KW-0479">Metal-binding</keyword>
<keyword id="KW-0519">Myristate</keyword>
<keyword id="KW-0597">Phosphoprotein</keyword>
<keyword id="KW-0677">Repeat</keyword>
<keyword id="KW-0688">Ribosomal frameshifting</keyword>
<keyword id="KW-1198">Viral budding</keyword>
<keyword id="KW-1187">Viral budding via the host ESCRT complexes</keyword>
<keyword id="KW-0468">Viral matrix protein</keyword>
<keyword id="KW-0543">Viral nucleoprotein</keyword>
<keyword id="KW-1188">Viral release from host cell</keyword>
<keyword id="KW-0946">Virion</keyword>
<keyword id="KW-0862">Zinc</keyword>
<keyword id="KW-0863">Zinc-finger</keyword>
<evidence type="ECO:0000250" key="1">
    <source>
        <dbReference type="UniProtKB" id="P03345"/>
    </source>
</evidence>
<evidence type="ECO:0000255" key="2"/>
<evidence type="ECO:0000255" key="3">
    <source>
        <dbReference type="PROSITE-ProRule" id="PRU00047"/>
    </source>
</evidence>
<evidence type="ECO:0000269" key="4">
    <source>
    </source>
</evidence>
<evidence type="ECO:0000269" key="5">
    <source>
    </source>
</evidence>
<evidence type="ECO:0000269" key="6">
    <source>
    </source>
</evidence>
<evidence type="ECO:0000305" key="7"/>
<feature type="initiator methionine" description="Removed; by host" evidence="2">
    <location>
        <position position="1"/>
    </location>
</feature>
<feature type="chain" id="PRO_0000442550" description="Gag polyprotein">
    <location>
        <begin position="2"/>
        <end position="392"/>
    </location>
</feature>
<feature type="chain" id="PRO_0000040830" description="Matrix protein p15">
    <location>
        <begin position="2"/>
        <end position="109"/>
    </location>
</feature>
<feature type="chain" id="PRO_0000040831" description="Capsid protein p24">
    <location>
        <begin position="110"/>
        <end position="323"/>
    </location>
</feature>
<feature type="chain" id="PRO_0000040832" description="Nucleocapsid protein p12-gag">
    <location>
        <begin position="324"/>
        <end position="392"/>
    </location>
</feature>
<feature type="repeat">
    <location>
        <begin position="342"/>
        <end position="362"/>
    </location>
</feature>
<feature type="repeat">
    <location>
        <begin position="367"/>
        <end position="387"/>
    </location>
</feature>
<feature type="zinc finger region" description="CCHC-type 1" evidence="3">
    <location>
        <begin position="345"/>
        <end position="362"/>
    </location>
</feature>
<feature type="zinc finger region" description="CCHC-type 2" evidence="3">
    <location>
        <begin position="370"/>
        <end position="387"/>
    </location>
</feature>
<feature type="short sequence motif" description="PPXY motif" evidence="4">
    <location>
        <begin position="100"/>
        <end position="103"/>
    </location>
</feature>
<feature type="site" description="Cleavage; by viral protease" evidence="1">
    <location>
        <begin position="109"/>
        <end position="110"/>
    </location>
</feature>
<feature type="site" description="Cleavage; by viral protease" evidence="1">
    <location>
        <begin position="323"/>
        <end position="324"/>
    </location>
</feature>
<feature type="lipid moiety-binding region" description="N-myristoyl glycine; by host" evidence="2">
    <location>
        <position position="2"/>
    </location>
</feature>
<feature type="mutagenesis site" description="Greatly reduced release of new viral particles." evidence="4">
    <original>PPPY</original>
    <variation>AAAA</variation>
    <location>
        <begin position="100"/>
        <end position="103"/>
    </location>
</feature>
<sequence length="392" mass="42862">MGNSPSYNPPAGISPSDWLNLLQSAQRLNPRPSPSDFTDLKNYIHWFHKTQKKPWTFTSGGPASCPPGKFGRVPLVLATLNEVLSNDEGAPGASAPEEQPPPYDPPAVLPIISEGNRNRHRAWALRELQDIKKEIENKAPGSQVWIQTLRLAILQADPTPADLEQLCQYIASPVDQTAHMTSLTAAIAAEAANTLQGFNPKMGTLTQQSAQPNAGDLRSQYQNLWLQAWKNLPTRPSVQPWSTIVQGPAESYVEFVNRLQISLADNLPDGVPKEPIIDSLSYANANKECQQILQGRGLVAAPVGQKLQACAHWAPKTKQPAILVHTPGPKMPGPRQPAPKRPPPGPCYRCLKEGHWARDCPTKTTGPPPGPCPICKDPSHWKRDCPTLKSKN</sequence>
<protein>
    <recommendedName>
        <fullName>Gag polyprotein</fullName>
    </recommendedName>
    <component>
        <recommendedName>
            <fullName>Matrix protein p15</fullName>
            <shortName>MA</shortName>
        </recommendedName>
    </component>
    <component>
        <recommendedName>
            <fullName>Capsid protein p24</fullName>
            <shortName>CA</shortName>
        </recommendedName>
    </component>
    <component>
        <recommendedName>
            <fullName>Nucleocapsid protein p12-gag</fullName>
        </recommendedName>
    </component>
</protein>
<dbReference type="EMBL" id="D00647">
    <property type="protein sequence ID" value="BAA00543.1"/>
    <property type="status" value="ALT_FRAME"/>
    <property type="molecule type" value="Genomic_DNA"/>
</dbReference>
<dbReference type="PIR" id="JQ0554">
    <property type="entry name" value="FOLJGA"/>
</dbReference>
<dbReference type="SMR" id="P25058"/>
<dbReference type="GO" id="GO:0019013">
    <property type="term" value="C:viral nucleocapsid"/>
    <property type="evidence" value="ECO:0007669"/>
    <property type="project" value="UniProtKB-KW"/>
</dbReference>
<dbReference type="GO" id="GO:0003676">
    <property type="term" value="F:nucleic acid binding"/>
    <property type="evidence" value="ECO:0007669"/>
    <property type="project" value="InterPro"/>
</dbReference>
<dbReference type="GO" id="GO:0039660">
    <property type="term" value="F:structural constituent of virion"/>
    <property type="evidence" value="ECO:0007669"/>
    <property type="project" value="UniProtKB-KW"/>
</dbReference>
<dbReference type="GO" id="GO:0008270">
    <property type="term" value="F:zinc ion binding"/>
    <property type="evidence" value="ECO:0007669"/>
    <property type="project" value="UniProtKB-KW"/>
</dbReference>
<dbReference type="GO" id="GO:0039702">
    <property type="term" value="P:viral budding via host ESCRT complex"/>
    <property type="evidence" value="ECO:0007669"/>
    <property type="project" value="UniProtKB-KW"/>
</dbReference>
<dbReference type="GO" id="GO:0075523">
    <property type="term" value="P:viral translational frameshifting"/>
    <property type="evidence" value="ECO:0007669"/>
    <property type="project" value="UniProtKB-KW"/>
</dbReference>
<dbReference type="FunFam" id="4.10.60.10:FF:000119">
    <property type="entry name" value="Gag polyprotein"/>
    <property type="match status" value="1"/>
</dbReference>
<dbReference type="FunFam" id="1.10.375.10:FF:000005">
    <property type="entry name" value="Gag-pro-pol polyprotein"/>
    <property type="match status" value="1"/>
</dbReference>
<dbReference type="Gene3D" id="1.10.1200.30">
    <property type="match status" value="1"/>
</dbReference>
<dbReference type="Gene3D" id="1.10.375.10">
    <property type="entry name" value="Human Immunodeficiency Virus Type 1 Capsid Protein"/>
    <property type="match status" value="1"/>
</dbReference>
<dbReference type="Gene3D" id="4.10.60.10">
    <property type="entry name" value="Zinc finger, CCHC-type"/>
    <property type="match status" value="1"/>
</dbReference>
<dbReference type="InterPro" id="IPR003139">
    <property type="entry name" value="D_retro_matrix"/>
</dbReference>
<dbReference type="InterPro" id="IPR045345">
    <property type="entry name" value="Gag_p24_C"/>
</dbReference>
<dbReference type="InterPro" id="IPR050195">
    <property type="entry name" value="Primate_lentivir_Gag_pol-like"/>
</dbReference>
<dbReference type="InterPro" id="IPR008916">
    <property type="entry name" value="Retrov_capsid_C"/>
</dbReference>
<dbReference type="InterPro" id="IPR008919">
    <property type="entry name" value="Retrov_capsid_N"/>
</dbReference>
<dbReference type="InterPro" id="IPR010999">
    <property type="entry name" value="Retrovr_matrix"/>
</dbReference>
<dbReference type="InterPro" id="IPR001878">
    <property type="entry name" value="Znf_CCHC"/>
</dbReference>
<dbReference type="InterPro" id="IPR036875">
    <property type="entry name" value="Znf_CCHC_sf"/>
</dbReference>
<dbReference type="PANTHER" id="PTHR40389">
    <property type="entry name" value="ENDOGENOUS RETROVIRUS GROUP K MEMBER 24 GAG POLYPROTEIN-RELATED"/>
    <property type="match status" value="1"/>
</dbReference>
<dbReference type="PANTHER" id="PTHR40389:SF3">
    <property type="entry name" value="IGE-BINDING PROTEIN"/>
    <property type="match status" value="1"/>
</dbReference>
<dbReference type="Pfam" id="PF02228">
    <property type="entry name" value="Gag_p19"/>
    <property type="match status" value="1"/>
</dbReference>
<dbReference type="Pfam" id="PF00607">
    <property type="entry name" value="Gag_p24"/>
    <property type="match status" value="1"/>
</dbReference>
<dbReference type="Pfam" id="PF19317">
    <property type="entry name" value="Gag_p24_C"/>
    <property type="match status" value="1"/>
</dbReference>
<dbReference type="Pfam" id="PF00098">
    <property type="entry name" value="zf-CCHC"/>
    <property type="match status" value="1"/>
</dbReference>
<dbReference type="SMART" id="SM00343">
    <property type="entry name" value="ZnF_C2HC"/>
    <property type="match status" value="2"/>
</dbReference>
<dbReference type="SUPFAM" id="SSF47836">
    <property type="entry name" value="Retroviral matrix proteins"/>
    <property type="match status" value="1"/>
</dbReference>
<dbReference type="SUPFAM" id="SSF47353">
    <property type="entry name" value="Retrovirus capsid dimerization domain-like"/>
    <property type="match status" value="1"/>
</dbReference>
<dbReference type="SUPFAM" id="SSF47943">
    <property type="entry name" value="Retrovirus capsid protein, N-terminal core domain"/>
    <property type="match status" value="1"/>
</dbReference>
<dbReference type="SUPFAM" id="SSF57756">
    <property type="entry name" value="Retrovirus zinc finger-like domains"/>
    <property type="match status" value="1"/>
</dbReference>
<dbReference type="PROSITE" id="PS50158">
    <property type="entry name" value="ZF_CCHC"/>
    <property type="match status" value="1"/>
</dbReference>
<organism>
    <name type="scientific">Bovine leukemia virus (isolate Australian)</name>
    <name type="common">BLV</name>
    <dbReference type="NCBI Taxonomy" id="11903"/>
    <lineage>
        <taxon>Viruses</taxon>
        <taxon>Riboviria</taxon>
        <taxon>Pararnavirae</taxon>
        <taxon>Artverviricota</taxon>
        <taxon>Revtraviricetes</taxon>
        <taxon>Ortervirales</taxon>
        <taxon>Retroviridae</taxon>
        <taxon>Orthoretrovirinae</taxon>
        <taxon>Deltaretrovirus</taxon>
        <taxon>Bovine leukemia virus</taxon>
    </lineage>
</organism>
<gene>
    <name type="primary">gag</name>
</gene>
<reference key="1">
    <citation type="journal article" date="1990" name="J. Gen. Virol.">
        <title>Molecular cloning and sequencing of an Australian isolate of proviral bovine leukaemia virus DNA: comparison with other isolates.</title>
        <authorList>
            <person name="Coulston J."/>
            <person name="Naif H."/>
            <person name="Brandon R."/>
            <person name="Kumar S."/>
            <person name="Khan S."/>
            <person name="Daniel R.C.W."/>
            <person name="Lavin M.F."/>
        </authorList>
    </citation>
    <scope>NUCLEOTIDE SEQUENCE [GENOMIC DNA]</scope>
</reference>
<reference key="2">
    <citation type="journal article" date="1984" name="FEBS Lett.">
        <title>Identification of a potential protease-coding gene in the genomes of bovine leukemia and human T-cell leukemia viruses.</title>
        <authorList>
            <person name="Sagata N."/>
            <person name="Yasunaga T."/>
            <person name="Ikawa Y."/>
        </authorList>
    </citation>
    <scope>RIBOSOMAL FRAMESHIFT</scope>
</reference>
<reference key="3">
    <citation type="journal article" date="2002" name="J. Virol.">
        <title>Analysis of bovine leukemia virus gag membrane targeting and late domain function.</title>
        <authorList>
            <person name="Wang H."/>
            <person name="Norris K.M."/>
            <person name="Mansky L.M."/>
        </authorList>
    </citation>
    <scope>DOMAIN LATE-BUDDING</scope>
    <scope>MUTAGENESIS OF 100-PRO--TYR-103</scope>
</reference>
<reference key="4">
    <citation type="journal article" date="2015" name="Biochem. Biophys. Res. Commun.">
        <title>Bovine leukemia virus nucleocapsid protein is an efficient nucleic acid chaperone.</title>
        <authorList>
            <person name="Qualley D.F."/>
            <person name="Sokolove V.L."/>
            <person name="Ross J.L."/>
        </authorList>
    </citation>
    <scope>FUNCTION (NUCLEOCAPSID PROTEIN P12-GAG)</scope>
</reference>
<reference key="5">
    <citation type="journal article" date="1996" name="EMBO J.">
        <title>The solution structure of the bovine leukaemia virus matrix protein and similarity with lentiviral matrix proteins.</title>
        <authorList>
            <person name="Matthews S."/>
            <person name="Miklhailov M."/>
            <person name="Burny A."/>
            <person name="Roy P."/>
        </authorList>
    </citation>
    <scope>STRUCTURE BY NMR OF 1-109</scope>
</reference>